<comment type="function">
    <text evidence="1 2">Indole-3-acetic acid-amido (IAA) synthetase that catalyzes the conjugation of amino acids to auxin specifically using the auxin precursor indole-3-butyric acid (IBA) and glutamine and, possibly, cysteine as substrates (PubMed:29462792, PubMed:30315112). Displays high catalytic activity with the auxinic phenoxyalkanoic acid herbicides 4-(2,4-dichlorophenoxy)butyric acid (2,4-DB) and to some extent 2,4-dichlorophenoxylacetic acid (2,4-D) as substrates, thus conferring resistance to herbicides (PubMed:30315112).</text>
</comment>
<comment type="catalytic activity">
    <reaction evidence="1">
        <text>(indol-3-yl)butanoate + L-cysteine + ATP = (indol-3-yl)butanoyl-L-cysteine + AMP + diphosphate + H(+)</text>
        <dbReference type="Rhea" id="RHEA:59876"/>
        <dbReference type="ChEBI" id="CHEBI:15378"/>
        <dbReference type="ChEBI" id="CHEBI:30616"/>
        <dbReference type="ChEBI" id="CHEBI:33019"/>
        <dbReference type="ChEBI" id="CHEBI:35235"/>
        <dbReference type="ChEBI" id="CHEBI:143274"/>
        <dbReference type="ChEBI" id="CHEBI:143280"/>
        <dbReference type="ChEBI" id="CHEBI:456215"/>
    </reaction>
</comment>
<comment type="catalytic activity">
    <reaction evidence="1 2">
        <text>(indol-3-yl)butanoate + L-glutamine + ATP = (indol-3-yl)butanoyl-L-glutamine + AMP + diphosphate + H(+)</text>
        <dbReference type="Rhea" id="RHEA:59864"/>
        <dbReference type="ChEBI" id="CHEBI:15378"/>
        <dbReference type="ChEBI" id="CHEBI:30616"/>
        <dbReference type="ChEBI" id="CHEBI:33019"/>
        <dbReference type="ChEBI" id="CHEBI:58359"/>
        <dbReference type="ChEBI" id="CHEBI:143274"/>
        <dbReference type="ChEBI" id="CHEBI:143275"/>
        <dbReference type="ChEBI" id="CHEBI:456215"/>
    </reaction>
</comment>
<comment type="catalytic activity">
    <reaction evidence="2">
        <text>4-(2,4-dichlorophenoxy)butanoate + L-glutamine + ATP = 4-(2,4-dichlorophenoxy)butanoyl-L-glutamine + AMP + diphosphate + H(+)</text>
        <dbReference type="Rhea" id="RHEA:59868"/>
        <dbReference type="ChEBI" id="CHEBI:15378"/>
        <dbReference type="ChEBI" id="CHEBI:30616"/>
        <dbReference type="ChEBI" id="CHEBI:33019"/>
        <dbReference type="ChEBI" id="CHEBI:58359"/>
        <dbReference type="ChEBI" id="CHEBI:143277"/>
        <dbReference type="ChEBI" id="CHEBI:143278"/>
        <dbReference type="ChEBI" id="CHEBI:456215"/>
    </reaction>
</comment>
<comment type="biophysicochemical properties">
    <kinetics>
        <KM evidence="1 2">556 uM for indole-3-acetic acid (in the presence of ATP and glutamine)</KM>
        <KM evidence="1">3430 uM for indole-3-propionic acid (in the presence of ATP and glutamine)</KM>
        <KM evidence="1 2">527 uM for indole-3-butyric acid (in the presence of ATP and glutamine)</KM>
        <KM evidence="1">1120 uM for jasmonic acid (in the presence of ATP and glutamine)</KM>
        <KM evidence="1">1780 uM for glutamine (in the presence of ATP and indole-3-butyric acid)</KM>
        <KM evidence="1">2530 uM for glutamine (in the presence of ATP and jasmonic acid)</KM>
        <KM evidence="1">2080 uM for cysteine (in the presence of ATP and indole-3-butyric acid)</KM>
        <KM evidence="1">12300 uM for histidine (in the presence of ATP and indole-3-butyric acid)</KM>
        <KM evidence="1">5670 uM for methionine (in the presence of ATP and indole-3-butyric acid)</KM>
        <KM evidence="1">18600 uM for tyrosine (in the presence of ATP and indole-3-butyric acid)</KM>
        <KM evidence="1">84 uM for ATP (in the presence of glutamine and indole-3-butyric acid)</KM>
        <KM evidence="2">590 uM for 4-(2,4-dichlorophenoxy)butyric acid (in the presence of ATP and glutamine)</KM>
        <KM evidence="2">3790 uM for 2,4-dichlorophenoxylacetic acid (in the presence of ATP and glutamine)</KM>
        <KM evidence="2">970 uM for glutamine (in the presence of ATP and 4-(2,4-dichlorophenoxy)butyric acid)</KM>
        <KM evidence="2">7240 uM for cysteine (in the presence of ATP and 4-(2,4-dichlorophenoxy)butyric acid)</KM>
        <KM evidence="2">9290 uM for histidine (in the presence of ATP and 4-(2,4-dichlorophenoxy)butyric acid)</KM>
        <KM evidence="2">10600 uM for methionine (in the presence of ATP and 4-(2,4-dichlorophenoxy)butyric acid)</KM>
        <KM evidence="2">18400 uM for tyrosine (in the presence of ATP and 4-(2,4-dichlorophenoxy)butyric acid)</KM>
        <KM evidence="2">23200 uM for 2,4,5-trichlorophenoxyacetic acid (in the presence of ATP and glutamine)</KM>
        <KM evidence="2">1130 uM for 4-(4-chloro-2-methylphenoxy)butanoic acid (in the presence of ATP and glutamine)</KM>
        <KM evidence="2">3550 uM for 4-(2-chlorophenoxy)butanoic acid (in the presence of ATP and glutamine)</KM>
        <KM evidence="2">180 uM for 4-(2,6-dimethylphenoxy)butanoic acid (in the presence of ATP and glutamine)</KM>
        <KM evidence="2">14800 uM for 4-(4-methoxyphenoxy)butanoic acid (in the presence of ATP and glutamine)</KM>
        <KM evidence="2">2140 uM for 4-phenoxybutyric acid (in the presence of ATP and glutamine)</KM>
        <KM evidence="2">6000 uM for 4-phenylbutryic acid (in the presence of ATP and glutamine)</KM>
        <KM evidence="2">960 uM for 5-phenylvaleric acid (in the presence of ATP and glutamine)</KM>
        <KM evidence="2">680 uM for 5-(4-fluorophenyl)valeric acid (in the presence of ATP and glutamine)</KM>
        <text evidence="1 2">kcat is 0.76 min(-1) with indole-3-acetic acid as substrate (in the presence of ATP and glutamine) (PubMed:29462792, PubMed:30315112). kcat is 10.2 min(-1) with indole-3-propionic acid as substrate (in the presence of ATP and glutamine) (PubMed:29462792). kcat is 9.9 min(-1) with indole-3-butyric acid as substrate (in the presence of ATP and glutamine) (PubMed:29462792, PubMed:30315112). kcat is 4.4 min(-1) with jasmonic acid as substrate (in the presence of ATP and glutamine) (PubMed:29462792). kcat is 17 min(-1) with glutamine as substrate (in the presence of ATP and indole-3-butyric acid) (PubMed:29462792). kcat is 4 min(-1) with glutamine as substrate (in the presence of ATP and jasmonic acid) (PubMed:29462792). kcat is 16 min(-1) with cysteine as substrate (in the presence of ATP and indole-3-butyric acid) (PubMed:29462792). kcat is 21 min(-1) with histidine as substrate (in the presence of ATP and indole-3-butyric acid) (PubMed:29462792). kcat is 13 min(-1) with methionine as substrate (in the presence of ATP and indole-3-butyric acid) (PubMed:29462792). kcat is 25 min(-1) with tyrosine as substrate (in the presence of ATP and indole-3-butyric acid) (PubMed:29462792). kcat is 13 min(-1) with ATP as substrate (in the presence of indole-3-butyric acid and glutamine) (PubMed:29462792). kcat is 11 min(-1) with 4-(2,4-dichlorophenoxy)butyric acid as substrate (in the presence of ATP and glutamine) (PubMed:30315112). kcat is 1.3 min(-1) with 2,4-dichlorophenoxylacetic acid as substrate (in the presence of ATP and glutamine) (PubMed:30315112). kcat is 52.3 min(-1) with glutamine as substrate (in the presence of ATP and 4-(2,4-dichlorophenoxy)butyric acid) (PubMed:30315112). kcat is 52.5 min(-1) with cysteine as substrate (in the presence of ATP and 4-(2,4-dichlorophenoxy)butyric acid) (PubMed:30315112). kcat is 43.1 min(-1) with histidine as substrate (in the presence of ATP and 4-(2,4-dichlorophenoxy)butyric acid) (PubMed:30315112). kcat is 27.5 min(-1) with methionine as substrate (in the presence of ATP and 4-(2,4-dichlorophenoxy)butyric acid) (PubMed:30315112). kcat is 12 min(-1) with tyrosine as substrate (in the presence of ATP and 4-(2,4-dichlorophenoxy)butyric acid) (PubMed:30315112). kcat is 4.3 min(-1) with 2,4,5-trichlorophenoxyacetic acid as substrate (in the presence of ATP and glutamine) (PubMed:30315112). kcat is 15.6 min(-1) with 4-(4-chloro-2-methylphenoxy)butanoic acid as substrate (in the presence of ATP and glutamine) (PubMed:30315112). kcat is 24 min(-1) with 4-(2-chlorophenoxy)butanoic acid as substrate (in the presence of ATP and glutamine) (PubMed:30315112). kcat is 5.4 min(-1) with 4-(2,6-dimethylphenoxy)butanoic acid as substrate (in the presence of ATP and glutamine) (PubMed:30315112). kcat is 29.8 min(-1) with 4-(4-methoxyphenoxy)butanoic acid as substrate (in the presence of ATP and glutamine) (PubMed:30315112). kcat is 16.2 min(-1) with 4-phenoxybutyric acid as substrate (in the presence of ATP and glutamine) (PubMed:30315112). kcat is 15 min(-1) with 4-phenylbutryic acid as substrate (in the presence of ATP and glutamine) (PubMed:30315112). kcat is 26.6 min(-1) with 5-phenylvaleric acid as substrate (in the presence of ATP and glutamine) (PubMed:30315112). kcat is 24 min(-1) with 5-(4-fluorophenyl)valeric acid as substrate (in the presence of ATP and glutamine) (PubMed:30315112).</text>
    </kinetics>
</comment>
<comment type="tissue specificity">
    <text evidence="1">Expressed in seedlings, roots, and parts of the siliques.</text>
</comment>
<comment type="developmental stage">
    <text evidence="1">Expressed widely in young seedling, including roots, shoots, and cotyledons. In older seedlings, present the primary root, shoots, and cotyledons, but not in the root epidermal cells or root hairs. Later observed in the cotyledons and the shoots, but not in the true leaves. In adult plants, accumulates in the primary root and lateral root tips and in the roots near the root/shoot junction. In mature siliques, confined to the tip of the silique in the style just below the stigma and at the base of the silique in the replum and abscission zone of siliques.</text>
</comment>
<comment type="disruption phenotype">
    <text evidence="1 2">No visible phenotype in normal conditions (PubMed:29462792). Slight reduction in root length when grown on media containing indole-3-butyric acid (IBA) (PubMed:29462792). Hypersensitivity to the auxinic phenoxyalkanoic acid herbicide 4-(2,4-dichlorophenoxy)butyric acid (2,4-DB) (PubMed:30315112).</text>
</comment>
<comment type="similarity">
    <text evidence="4">Belongs to the IAA-amido conjugating enzyme family.</text>
</comment>
<comment type="sequence caution" evidence="4">
    <conflict type="erroneous gene model prediction">
        <sequence resource="EMBL-CDS" id="CAB87144"/>
    </conflict>
</comment>
<gene>
    <name evidence="3" type="primary">GH3.15</name>
    <name evidence="5" type="ordered locus">At5g13370</name>
    <name evidence="6" type="ORF">T22N19.20</name>
</gene>
<protein>
    <recommendedName>
        <fullName evidence="3">Indole-3-acetic acid-amido synthetase GH3.15</fullName>
        <ecNumber evidence="1 2">6.3.2.-</ecNumber>
    </recommendedName>
    <alternativeName>
        <fullName evidence="3">Auxin-responsive GH3-like protein 15</fullName>
        <shortName evidence="3">AtGH3-15</shortName>
    </alternativeName>
    <alternativeName>
        <fullName evidence="3">Protein GRETCHEN HAGEN 3.15</fullName>
    </alternativeName>
</protein>
<keyword id="KW-0002">3D-structure</keyword>
<keyword id="KW-0067">ATP-binding</keyword>
<keyword id="KW-0436">Ligase</keyword>
<keyword id="KW-0547">Nucleotide-binding</keyword>
<keyword id="KW-1185">Reference proteome</keyword>
<reference key="1">
    <citation type="journal article" date="2000" name="Nature">
        <title>Sequence and analysis of chromosome 5 of the plant Arabidopsis thaliana.</title>
        <authorList>
            <person name="Tabata S."/>
            <person name="Kaneko T."/>
            <person name="Nakamura Y."/>
            <person name="Kotani H."/>
            <person name="Kato T."/>
            <person name="Asamizu E."/>
            <person name="Miyajima N."/>
            <person name="Sasamoto S."/>
            <person name="Kimura T."/>
            <person name="Hosouchi T."/>
            <person name="Kawashima K."/>
            <person name="Kohara M."/>
            <person name="Matsumoto M."/>
            <person name="Matsuno A."/>
            <person name="Muraki A."/>
            <person name="Nakayama S."/>
            <person name="Nakazaki N."/>
            <person name="Naruo K."/>
            <person name="Okumura S."/>
            <person name="Shinpo S."/>
            <person name="Takeuchi C."/>
            <person name="Wada T."/>
            <person name="Watanabe A."/>
            <person name="Yamada M."/>
            <person name="Yasuda M."/>
            <person name="Sato S."/>
            <person name="de la Bastide M."/>
            <person name="Huang E."/>
            <person name="Spiegel L."/>
            <person name="Gnoj L."/>
            <person name="O'Shaughnessy A."/>
            <person name="Preston R."/>
            <person name="Habermann K."/>
            <person name="Murray J."/>
            <person name="Johnson D."/>
            <person name="Rohlfing T."/>
            <person name="Nelson J."/>
            <person name="Stoneking T."/>
            <person name="Pepin K."/>
            <person name="Spieth J."/>
            <person name="Sekhon M."/>
            <person name="Armstrong J."/>
            <person name="Becker M."/>
            <person name="Belter E."/>
            <person name="Cordum H."/>
            <person name="Cordes M."/>
            <person name="Courtney L."/>
            <person name="Courtney W."/>
            <person name="Dante M."/>
            <person name="Du H."/>
            <person name="Edwards J."/>
            <person name="Fryman J."/>
            <person name="Haakensen B."/>
            <person name="Lamar E."/>
            <person name="Latreille P."/>
            <person name="Leonard S."/>
            <person name="Meyer R."/>
            <person name="Mulvaney E."/>
            <person name="Ozersky P."/>
            <person name="Riley A."/>
            <person name="Strowmatt C."/>
            <person name="Wagner-McPherson C."/>
            <person name="Wollam A."/>
            <person name="Yoakum M."/>
            <person name="Bell M."/>
            <person name="Dedhia N."/>
            <person name="Parnell L."/>
            <person name="Shah R."/>
            <person name="Rodriguez M."/>
            <person name="Hoon See L."/>
            <person name="Vil D."/>
            <person name="Baker J."/>
            <person name="Kirchoff K."/>
            <person name="Toth K."/>
            <person name="King L."/>
            <person name="Bahret A."/>
            <person name="Miller B."/>
            <person name="Marra M.A."/>
            <person name="Martienssen R."/>
            <person name="McCombie W.R."/>
            <person name="Wilson R.K."/>
            <person name="Murphy G."/>
            <person name="Bancroft I."/>
            <person name="Volckaert G."/>
            <person name="Wambutt R."/>
            <person name="Duesterhoeft A."/>
            <person name="Stiekema W."/>
            <person name="Pohl T."/>
            <person name="Entian K.-D."/>
            <person name="Terryn N."/>
            <person name="Hartley N."/>
            <person name="Bent E."/>
            <person name="Johnson S."/>
            <person name="Langham S.-A."/>
            <person name="McCullagh B."/>
            <person name="Robben J."/>
            <person name="Grymonprez B."/>
            <person name="Zimmermann W."/>
            <person name="Ramsperger U."/>
            <person name="Wedler H."/>
            <person name="Balke K."/>
            <person name="Wedler E."/>
            <person name="Peters S."/>
            <person name="van Staveren M."/>
            <person name="Dirkse W."/>
            <person name="Mooijman P."/>
            <person name="Klein Lankhorst R."/>
            <person name="Weitzenegger T."/>
            <person name="Bothe G."/>
            <person name="Rose M."/>
            <person name="Hauf J."/>
            <person name="Berneiser S."/>
            <person name="Hempel S."/>
            <person name="Feldpausch M."/>
            <person name="Lamberth S."/>
            <person name="Villarroel R."/>
            <person name="Gielen J."/>
            <person name="Ardiles W."/>
            <person name="Bents O."/>
            <person name="Lemcke K."/>
            <person name="Kolesov G."/>
            <person name="Mayer K.F.X."/>
            <person name="Rudd S."/>
            <person name="Schoof H."/>
            <person name="Schueller C."/>
            <person name="Zaccaria P."/>
            <person name="Mewes H.-W."/>
            <person name="Bevan M."/>
            <person name="Fransz P.F."/>
        </authorList>
    </citation>
    <scope>NUCLEOTIDE SEQUENCE [LARGE SCALE GENOMIC DNA]</scope>
    <source>
        <strain>cv. Columbia</strain>
    </source>
</reference>
<reference key="2">
    <citation type="journal article" date="2017" name="Plant J.">
        <title>Araport11: a complete reannotation of the Arabidopsis thaliana reference genome.</title>
        <authorList>
            <person name="Cheng C.Y."/>
            <person name="Krishnakumar V."/>
            <person name="Chan A.P."/>
            <person name="Thibaud-Nissen F."/>
            <person name="Schobel S."/>
            <person name="Town C.D."/>
        </authorList>
    </citation>
    <scope>GENOME REANNOTATION</scope>
    <source>
        <strain>cv. Columbia</strain>
    </source>
</reference>
<reference key="3">
    <citation type="journal article" date="2002" name="Science">
        <title>Functional annotation of a full-length Arabidopsis cDNA collection.</title>
        <authorList>
            <person name="Seki M."/>
            <person name="Narusaka M."/>
            <person name="Kamiya A."/>
            <person name="Ishida J."/>
            <person name="Satou M."/>
            <person name="Sakurai T."/>
            <person name="Nakajima M."/>
            <person name="Enju A."/>
            <person name="Akiyama K."/>
            <person name="Oono Y."/>
            <person name="Muramatsu M."/>
            <person name="Hayashizaki Y."/>
            <person name="Kawai J."/>
            <person name="Carninci P."/>
            <person name="Itoh M."/>
            <person name="Ishii Y."/>
            <person name="Arakawa T."/>
            <person name="Shibata K."/>
            <person name="Shinagawa A."/>
            <person name="Shinozaki K."/>
        </authorList>
    </citation>
    <scope>NUCLEOTIDE SEQUENCE [LARGE SCALE MRNA]</scope>
    <source>
        <strain>cv. Columbia</strain>
    </source>
</reference>
<reference key="4">
    <citation type="journal article" date="2003" name="Science">
        <title>Empirical analysis of transcriptional activity in the Arabidopsis genome.</title>
        <authorList>
            <person name="Yamada K."/>
            <person name="Lim J."/>
            <person name="Dale J.M."/>
            <person name="Chen H."/>
            <person name="Shinn P."/>
            <person name="Palm C.J."/>
            <person name="Southwick A.M."/>
            <person name="Wu H.C."/>
            <person name="Kim C.J."/>
            <person name="Nguyen M."/>
            <person name="Pham P.K."/>
            <person name="Cheuk R.F."/>
            <person name="Karlin-Newmann G."/>
            <person name="Liu S.X."/>
            <person name="Lam B."/>
            <person name="Sakano H."/>
            <person name="Wu T."/>
            <person name="Yu G."/>
            <person name="Miranda M."/>
            <person name="Quach H.L."/>
            <person name="Tripp M."/>
            <person name="Chang C.H."/>
            <person name="Lee J.M."/>
            <person name="Toriumi M.J."/>
            <person name="Chan M.M."/>
            <person name="Tang C.C."/>
            <person name="Onodera C.S."/>
            <person name="Deng J.M."/>
            <person name="Akiyama K."/>
            <person name="Ansari Y."/>
            <person name="Arakawa T."/>
            <person name="Banh J."/>
            <person name="Banno F."/>
            <person name="Bowser L."/>
            <person name="Brooks S.Y."/>
            <person name="Carninci P."/>
            <person name="Chao Q."/>
            <person name="Choy N."/>
            <person name="Enju A."/>
            <person name="Goldsmith A.D."/>
            <person name="Gurjal M."/>
            <person name="Hansen N.F."/>
            <person name="Hayashizaki Y."/>
            <person name="Johnson-Hopson C."/>
            <person name="Hsuan V.W."/>
            <person name="Iida K."/>
            <person name="Karnes M."/>
            <person name="Khan S."/>
            <person name="Koesema E."/>
            <person name="Ishida J."/>
            <person name="Jiang P.X."/>
            <person name="Jones T."/>
            <person name="Kawai J."/>
            <person name="Kamiya A."/>
            <person name="Meyers C."/>
            <person name="Nakajima M."/>
            <person name="Narusaka M."/>
            <person name="Seki M."/>
            <person name="Sakurai T."/>
            <person name="Satou M."/>
            <person name="Tamse R."/>
            <person name="Vaysberg M."/>
            <person name="Wallender E.K."/>
            <person name="Wong C."/>
            <person name="Yamamura Y."/>
            <person name="Yuan S."/>
            <person name="Shinozaki K."/>
            <person name="Davis R.W."/>
            <person name="Theologis A."/>
            <person name="Ecker J.R."/>
        </authorList>
    </citation>
    <scope>NUCLEOTIDE SEQUENCE [LARGE SCALE MRNA]</scope>
    <source>
        <strain>cv. Columbia</strain>
    </source>
</reference>
<reference key="5">
    <citation type="journal article" date="2002" name="Plant Mol. Biol.">
        <title>Auxin-responsive gene expression: genes, promoters and regulatory factors.</title>
        <authorList>
            <person name="Hagen G."/>
            <person name="Guilfoyle T.J."/>
        </authorList>
    </citation>
    <scope>NOMENCLATURE</scope>
</reference>
<reference key="6">
    <citation type="journal article" date="2018" name="J. Biol. Chem.">
        <title>Arabidopsis thaliana GH3.15 acyl acid amido synthetase has a highly specific substrate preference for the auxin precursor indole-3-butyric acid.</title>
        <authorList>
            <person name="Sherp A.M."/>
            <person name="Westfall C.S."/>
            <person name="Alvarez S."/>
            <person name="Jez J.M."/>
        </authorList>
    </citation>
    <scope>X-RAY CRYSTALLOGRAPHY (3.01 ANGSTROMS) IN COMPLEX WITH AMP</scope>
    <scope>CATALYTIC ACTIVITY</scope>
    <scope>DISULFIDE BONDS</scope>
    <scope>FUNCTION</scope>
    <scope>MUTAGENESIS OF SER-122; MET-162; PHE-166 AND PHE-332</scope>
    <scope>DISRUPTION PHENOTYPE</scope>
    <scope>TISSUE SPECIFICITY</scope>
    <scope>DEVELOPMENTAL STAGE</scope>
    <scope>BIOPHYSICOCHEMICAL PROPERTIES</scope>
    <source>
        <strain>cv. Columbia</strain>
    </source>
</reference>
<reference key="7">
    <citation type="journal article" date="2018" name="J. Biol. Chem.">
        <title>Modification of auxinic phenoxyalkanoic acid herbicides by the acyl acid amido synthetase GH3.15 from Arabidopsis.</title>
        <authorList>
            <person name="Sherp A.M."/>
            <person name="Lee S.G."/>
            <person name="Schraft E."/>
            <person name="Jez J.M."/>
        </authorList>
    </citation>
    <scope>X-RAY CRYSTALLOGRAPHY (2.15 ANGSTROMS) IN COMPLEX WITH 4-(2,4-DICHLOROPHENOXY)BUTYRIC ACID</scope>
    <scope>CATALYTIC ACTIVITY</scope>
    <scope>FUNCTION</scope>
    <scope>DISRUPTION PHENOTYPE</scope>
    <scope>DISULFIDE BONDS</scope>
    <scope>BIOPHYSICOCHEMICAL PROPERTIES</scope>
    <source>
        <strain>cv. Columbia</strain>
    </source>
</reference>
<accession>Q8GZ29</accession>
<accession>Q9LYR9</accession>
<evidence type="ECO:0000269" key="1">
    <source>
    </source>
</evidence>
<evidence type="ECO:0000269" key="2">
    <source>
    </source>
</evidence>
<evidence type="ECO:0000303" key="3">
    <source>
    </source>
</evidence>
<evidence type="ECO:0000305" key="4"/>
<evidence type="ECO:0000312" key="5">
    <source>
        <dbReference type="Araport" id="AT5G13370"/>
    </source>
</evidence>
<evidence type="ECO:0000312" key="6">
    <source>
        <dbReference type="EMBL" id="CAB87144.1"/>
    </source>
</evidence>
<evidence type="ECO:0007744" key="7">
    <source>
        <dbReference type="PDB" id="6AVH"/>
    </source>
</evidence>
<evidence type="ECO:0007744" key="8">
    <source>
        <dbReference type="PDB" id="6E1Q"/>
    </source>
</evidence>
<evidence type="ECO:0007829" key="9">
    <source>
        <dbReference type="PDB" id="6AVH"/>
    </source>
</evidence>
<evidence type="ECO:0007829" key="10">
    <source>
        <dbReference type="PDB" id="6E1Q"/>
    </source>
</evidence>
<organism>
    <name type="scientific">Arabidopsis thaliana</name>
    <name type="common">Mouse-ear cress</name>
    <dbReference type="NCBI Taxonomy" id="3702"/>
    <lineage>
        <taxon>Eukaryota</taxon>
        <taxon>Viridiplantae</taxon>
        <taxon>Streptophyta</taxon>
        <taxon>Embryophyta</taxon>
        <taxon>Tracheophyta</taxon>
        <taxon>Spermatophyta</taxon>
        <taxon>Magnoliopsida</taxon>
        <taxon>eudicotyledons</taxon>
        <taxon>Gunneridae</taxon>
        <taxon>Pentapetalae</taxon>
        <taxon>rosids</taxon>
        <taxon>malvids</taxon>
        <taxon>Brassicales</taxon>
        <taxon>Brassicaceae</taxon>
        <taxon>Camelineae</taxon>
        <taxon>Arabidopsis</taxon>
    </lineage>
</organism>
<sequence length="595" mass="66979">MLPKFDPTNQKACLSLLEDLTTNVKQIQDSVLEAILSRNAQTEYLRGFLNGQVDKQNFKKNVPVVTYEDIRSYIDRIANGEPSDLICDRPISVLLTSSGTSGGVPKLIPLTTEDLEQRISFSSLYAPLLYKHIDGLSEGKSLIFYFVTRESKTANGLMVRTMVTSFLKSIKQTNSFLWDSLQVSPHAITTCADTTQSMYCQLLCGLLERDNVARLGAPFASSFLKVIKFLEDHWPELCSNIRTGRLSDWITDATCTSGIGKFLTAPNPELASLIEQECSKTSWEAILKRLWPKAKCIESIITGTMAQYIPLLEFYSGGLPLTSSFYGSSECFMGVNFNPLCKPSDVSYTIIPCMGYFEFLEVEKDHQEAGHDPTEKPVVVDLVDVKIGHDYEPVVTTFSGLYRYRVGDVLRATGFYNNAPHFCFVGRQKVVLSIDMDKTYEDDLLKAVTNAKLLLEPHDLMLMDFTSRVDSSSFPGHYVIYWELGSKVKDAKFEPNRDVMEECCFTVEESLDAVYRKGRKNDKNIGPLEIKVVKPGAFDELMNFFLSRGSSVSQYKTPRSVTNEEALKILEANVISEFLSRKIPSWELHELHSGR</sequence>
<feature type="chain" id="PRO_0000447233" description="Indole-3-acetic acid-amido synthetase GH3.15">
    <location>
        <begin position="1"/>
        <end position="595"/>
    </location>
</feature>
<feature type="binding site" evidence="1 7">
    <location>
        <begin position="97"/>
        <end position="98"/>
    </location>
    <ligand>
        <name>ATP</name>
        <dbReference type="ChEBI" id="CHEBI:30616"/>
    </ligand>
</feature>
<feature type="binding site" evidence="1 7">
    <location>
        <position position="302"/>
    </location>
    <ligand>
        <name>ATP</name>
        <dbReference type="ChEBI" id="CHEBI:30616"/>
    </ligand>
</feature>
<feature type="binding site" evidence="1 7">
    <location>
        <begin position="325"/>
        <end position="330"/>
    </location>
    <ligand>
        <name>ATP</name>
        <dbReference type="ChEBI" id="CHEBI:30616"/>
    </ligand>
</feature>
<feature type="binding site" evidence="2 8">
    <location>
        <position position="325"/>
    </location>
    <ligand>
        <name>substrate</name>
    </ligand>
</feature>
<feature type="binding site" evidence="2 8">
    <location>
        <position position="332"/>
    </location>
    <ligand>
        <name>substrate</name>
    </ligand>
</feature>
<feature type="binding site" evidence="1 7">
    <location>
        <position position="348"/>
    </location>
    <ligand>
        <name>ATP</name>
        <dbReference type="ChEBI" id="CHEBI:30616"/>
    </ligand>
</feature>
<feature type="binding site" evidence="1 7">
    <location>
        <position position="408"/>
    </location>
    <ligand>
        <name>ATP</name>
        <dbReference type="ChEBI" id="CHEBI:30616"/>
    </ligand>
</feature>
<feature type="mutagenesis site" description="Increased affinity and enhanced catalytic activity leading to improved efficiency toward indole-3-butyric acid. Reduced affinity but increased catalytic activity leading to almost unaffected efficiency toward indole-3-acetic acid." evidence="1">
    <original>S</original>
    <variation>F</variation>
    <variation>I</variation>
    <variation>L</variation>
    <location>
        <position position="122"/>
    </location>
</feature>
<feature type="mutagenesis site" description="Reduced affinity and altered catalytic activity leading to decreased efficiency toward indole-3-butyric acid." evidence="1">
    <original>S</original>
    <variation>W</variation>
    <location>
        <position position="122"/>
    </location>
</feature>
<feature type="mutagenesis site" description="Reduced affinity but enhanced catalytic activity leading to improved efficiency toward indole-3-butyric acid. Reduced affinity but increased catalytic activity leading to almost unaffected efficiency toward indole-3-acetic acid." evidence="1">
    <original>S</original>
    <variation>Y</variation>
    <location>
        <position position="122"/>
    </location>
</feature>
<feature type="mutagenesis site" description="Increased affinity and enhanced catalytic activity leading to improved efficiency toward indole-3-butyric acid. Slightly increased affinity but normal catalytic activity leading to slightly improved efficiency toward indole-3-acetic acid." evidence="1">
    <original>M</original>
    <variation>V</variation>
    <location>
        <position position="162"/>
    </location>
</feature>
<feature type="mutagenesis site" description="Strongly reduced affinity but enhanced catalytic activity leading to reduced efficiency toward indole-3-butyric acid. Slightly increased affinity and slightly better catalytic activity leading to slightly improved efficiency toward indole-3-acetic acid." evidence="1">
    <original>F</original>
    <variation>V</variation>
    <location>
        <position position="166"/>
    </location>
</feature>
<feature type="mutagenesis site" description="Strongly reduced affinity but normal catalytic activity leading to reduced efficiency toward indole-3-butyric acid. Strongly reduced affinity and slightly better catalytic activity leading to reduced efficiency toward indole-3-acetic acid." evidence="1">
    <original>F</original>
    <variation>V</variation>
    <location>
        <position position="332"/>
    </location>
</feature>
<feature type="helix" evidence="10">
    <location>
        <begin position="10"/>
        <end position="22"/>
    </location>
</feature>
<feature type="helix" evidence="10">
    <location>
        <begin position="24"/>
        <end position="38"/>
    </location>
</feature>
<feature type="turn" evidence="10">
    <location>
        <begin position="39"/>
        <end position="41"/>
    </location>
</feature>
<feature type="helix" evidence="10">
    <location>
        <begin position="43"/>
        <end position="49"/>
    </location>
</feature>
<feature type="helix" evidence="10">
    <location>
        <begin position="55"/>
        <end position="61"/>
    </location>
</feature>
<feature type="helix" evidence="10">
    <location>
        <begin position="67"/>
        <end position="78"/>
    </location>
</feature>
<feature type="helix" evidence="10">
    <location>
        <begin position="83"/>
        <end position="85"/>
    </location>
</feature>
<feature type="strand" evidence="10">
    <location>
        <begin position="91"/>
        <end position="111"/>
    </location>
</feature>
<feature type="helix" evidence="10">
    <location>
        <begin position="112"/>
        <end position="132"/>
    </location>
</feature>
<feature type="helix" evidence="10">
    <location>
        <begin position="136"/>
        <end position="138"/>
    </location>
</feature>
<feature type="strand" evidence="10">
    <location>
        <begin position="139"/>
        <end position="143"/>
    </location>
</feature>
<feature type="strand" evidence="9">
    <location>
        <begin position="154"/>
        <end position="156"/>
    </location>
</feature>
<feature type="strand" evidence="10">
    <location>
        <begin position="158"/>
        <end position="160"/>
    </location>
</feature>
<feature type="helix" evidence="10">
    <location>
        <begin position="162"/>
        <end position="172"/>
    </location>
</feature>
<feature type="strand" evidence="10">
    <location>
        <begin position="181"/>
        <end position="183"/>
    </location>
</feature>
<feature type="turn" evidence="10">
    <location>
        <begin position="185"/>
        <end position="188"/>
    </location>
</feature>
<feature type="helix" evidence="10">
    <location>
        <begin position="194"/>
        <end position="207"/>
    </location>
</feature>
<feature type="helix" evidence="10">
    <location>
        <begin position="209"/>
        <end position="211"/>
    </location>
</feature>
<feature type="strand" evidence="10">
    <location>
        <begin position="212"/>
        <end position="219"/>
    </location>
</feature>
<feature type="helix" evidence="10">
    <location>
        <begin position="220"/>
        <end position="243"/>
    </location>
</feature>
<feature type="helix" evidence="10">
    <location>
        <begin position="253"/>
        <end position="258"/>
    </location>
</feature>
<feature type="helix" evidence="10">
    <location>
        <begin position="259"/>
        <end position="261"/>
    </location>
</feature>
<feature type="helix" evidence="10">
    <location>
        <begin position="268"/>
        <end position="278"/>
    </location>
</feature>
<feature type="helix" evidence="10">
    <location>
        <begin position="286"/>
        <end position="290"/>
    </location>
</feature>
<feature type="strand" evidence="10">
    <location>
        <begin position="297"/>
        <end position="300"/>
    </location>
</feature>
<feature type="helix" evidence="10">
    <location>
        <begin position="303"/>
        <end position="308"/>
    </location>
</feature>
<feature type="helix" evidence="10">
    <location>
        <begin position="309"/>
        <end position="316"/>
    </location>
</feature>
<feature type="strand" evidence="10">
    <location>
        <begin position="325"/>
        <end position="327"/>
    </location>
</feature>
<feature type="strand" evidence="10">
    <location>
        <begin position="332"/>
        <end position="335"/>
    </location>
</feature>
<feature type="helix" evidence="10">
    <location>
        <begin position="343"/>
        <end position="345"/>
    </location>
</feature>
<feature type="strand" evidence="10">
    <location>
        <begin position="348"/>
        <end position="350"/>
    </location>
</feature>
<feature type="strand" evidence="10">
    <location>
        <begin position="356"/>
        <end position="361"/>
    </location>
</feature>
<feature type="strand" evidence="10">
    <location>
        <begin position="379"/>
        <end position="381"/>
    </location>
</feature>
<feature type="helix" evidence="10">
    <location>
        <begin position="382"/>
        <end position="384"/>
    </location>
</feature>
<feature type="strand" evidence="10">
    <location>
        <begin position="390"/>
        <end position="396"/>
    </location>
</feature>
<feature type="strand" evidence="10">
    <location>
        <begin position="398"/>
        <end position="400"/>
    </location>
</feature>
<feature type="strand" evidence="10">
    <location>
        <begin position="403"/>
        <end position="405"/>
    </location>
</feature>
<feature type="strand" evidence="10">
    <location>
        <begin position="408"/>
        <end position="416"/>
    </location>
</feature>
<feature type="strand" evidence="10">
    <location>
        <begin position="419"/>
        <end position="427"/>
    </location>
</feature>
<feature type="strand" evidence="10">
    <location>
        <begin position="430"/>
        <end position="432"/>
    </location>
</feature>
<feature type="strand" evidence="10">
    <location>
        <begin position="434"/>
        <end position="436"/>
    </location>
</feature>
<feature type="helix" evidence="10">
    <location>
        <begin position="441"/>
        <end position="452"/>
    </location>
</feature>
<feature type="helix" evidence="10">
    <location>
        <begin position="453"/>
        <end position="458"/>
    </location>
</feature>
<feature type="strand" evidence="10">
    <location>
        <begin position="461"/>
        <end position="470"/>
    </location>
</feature>
<feature type="strand" evidence="10">
    <location>
        <begin position="472"/>
        <end position="485"/>
    </location>
</feature>
<feature type="helix" evidence="10">
    <location>
        <begin position="497"/>
        <end position="510"/>
    </location>
</feature>
<feature type="helix" evidence="10">
    <location>
        <begin position="513"/>
        <end position="520"/>
    </location>
</feature>
<feature type="strand" evidence="10">
    <location>
        <begin position="529"/>
        <end position="533"/>
    </location>
</feature>
<feature type="helix" evidence="10">
    <location>
        <begin position="537"/>
        <end position="547"/>
    </location>
</feature>
<feature type="turn" evidence="9">
    <location>
        <begin position="552"/>
        <end position="554"/>
    </location>
</feature>
<feature type="helix" evidence="10">
    <location>
        <begin position="564"/>
        <end position="571"/>
    </location>
</feature>
<feature type="strand" evidence="10">
    <location>
        <begin position="574"/>
        <end position="579"/>
    </location>
</feature>
<proteinExistence type="evidence at protein level"/>
<dbReference type="EC" id="6.3.2.-" evidence="1 2"/>
<dbReference type="EMBL" id="AL163572">
    <property type="protein sequence ID" value="CAB87144.1"/>
    <property type="status" value="ALT_SEQ"/>
    <property type="molecule type" value="Genomic_DNA"/>
</dbReference>
<dbReference type="EMBL" id="CP002688">
    <property type="protein sequence ID" value="AED91887.1"/>
    <property type="molecule type" value="Genomic_DNA"/>
</dbReference>
<dbReference type="EMBL" id="BT005922">
    <property type="protein sequence ID" value="AAO64857.1"/>
    <property type="molecule type" value="mRNA"/>
</dbReference>
<dbReference type="EMBL" id="AK117242">
    <property type="protein sequence ID" value="BAC41918.1"/>
    <property type="molecule type" value="mRNA"/>
</dbReference>
<dbReference type="PIR" id="T48584">
    <property type="entry name" value="T48584"/>
</dbReference>
<dbReference type="RefSeq" id="NP_196841.2">
    <property type="nucleotide sequence ID" value="NM_121340.3"/>
</dbReference>
<dbReference type="PDB" id="6AVH">
    <property type="method" value="X-ray"/>
    <property type="resolution" value="3.01 A"/>
    <property type="chains" value="A/B/C/D=1-595"/>
</dbReference>
<dbReference type="PDB" id="6E1Q">
    <property type="method" value="X-ray"/>
    <property type="resolution" value="2.15 A"/>
    <property type="chains" value="A=1-595"/>
</dbReference>
<dbReference type="PDBsum" id="6AVH"/>
<dbReference type="PDBsum" id="6E1Q"/>
<dbReference type="SMR" id="Q8GZ29"/>
<dbReference type="FunCoup" id="Q8GZ29">
    <property type="interactions" value="1095"/>
</dbReference>
<dbReference type="STRING" id="3702.Q8GZ29"/>
<dbReference type="PaxDb" id="3702-AT5G13370.1"/>
<dbReference type="ProteomicsDB" id="179737"/>
<dbReference type="EnsemblPlants" id="AT5G13370.1">
    <property type="protein sequence ID" value="AT5G13370.1"/>
    <property type="gene ID" value="AT5G13370"/>
</dbReference>
<dbReference type="GeneID" id="831178"/>
<dbReference type="Gramene" id="AT5G13370.1">
    <property type="protein sequence ID" value="AT5G13370.1"/>
    <property type="gene ID" value="AT5G13370"/>
</dbReference>
<dbReference type="KEGG" id="ath:AT5G13370"/>
<dbReference type="Araport" id="AT5G13370"/>
<dbReference type="TAIR" id="AT5G13370">
    <property type="gene designation" value="GH3.15"/>
</dbReference>
<dbReference type="eggNOG" id="ENOG502QPMU">
    <property type="taxonomic scope" value="Eukaryota"/>
</dbReference>
<dbReference type="HOGENOM" id="CLU_016249_2_1_1"/>
<dbReference type="InParanoid" id="Q8GZ29"/>
<dbReference type="OMA" id="ICDRPIT"/>
<dbReference type="PhylomeDB" id="Q8GZ29"/>
<dbReference type="SABIO-RK" id="Q8GZ29"/>
<dbReference type="PRO" id="PR:Q8GZ29"/>
<dbReference type="Proteomes" id="UP000006548">
    <property type="component" value="Chromosome 5"/>
</dbReference>
<dbReference type="ExpressionAtlas" id="Q8GZ29">
    <property type="expression patterns" value="baseline and differential"/>
</dbReference>
<dbReference type="GO" id="GO:0005829">
    <property type="term" value="C:cytosol"/>
    <property type="evidence" value="ECO:0007005"/>
    <property type="project" value="TAIR"/>
</dbReference>
<dbReference type="GO" id="GO:0005524">
    <property type="term" value="F:ATP binding"/>
    <property type="evidence" value="ECO:0007669"/>
    <property type="project" value="UniProtKB-KW"/>
</dbReference>
<dbReference type="GO" id="GO:0070406">
    <property type="term" value="F:glutamine binding"/>
    <property type="evidence" value="ECO:0000314"/>
    <property type="project" value="TAIR"/>
</dbReference>
<dbReference type="GO" id="GO:0016874">
    <property type="term" value="F:ligase activity"/>
    <property type="evidence" value="ECO:0007669"/>
    <property type="project" value="UniProtKB-KW"/>
</dbReference>
<dbReference type="GO" id="GO:0010249">
    <property type="term" value="P:auxin conjugate metabolic process"/>
    <property type="evidence" value="ECO:0000314"/>
    <property type="project" value="TAIR"/>
</dbReference>
<dbReference type="InterPro" id="IPR004993">
    <property type="entry name" value="GH3"/>
</dbReference>
<dbReference type="InterPro" id="IPR055378">
    <property type="entry name" value="GH3_C"/>
</dbReference>
<dbReference type="InterPro" id="IPR055377">
    <property type="entry name" value="GH3_M"/>
</dbReference>
<dbReference type="PANTHER" id="PTHR31901:SF78">
    <property type="entry name" value="AUXIN-RESPONSIVE GH3 FAMILY PROTEIN-RELATED"/>
    <property type="match status" value="1"/>
</dbReference>
<dbReference type="PANTHER" id="PTHR31901">
    <property type="entry name" value="GH3 DOMAIN-CONTAINING PROTEIN"/>
    <property type="match status" value="1"/>
</dbReference>
<dbReference type="Pfam" id="PF03321">
    <property type="entry name" value="GH3"/>
    <property type="match status" value="1"/>
</dbReference>
<dbReference type="Pfam" id="PF23572">
    <property type="entry name" value="GH3_C"/>
    <property type="match status" value="1"/>
</dbReference>
<dbReference type="Pfam" id="PF23571">
    <property type="entry name" value="GH3_M"/>
    <property type="match status" value="1"/>
</dbReference>
<name>GH315_ARATH</name>